<evidence type="ECO:0000255" key="1">
    <source>
        <dbReference type="HAMAP-Rule" id="MF_00076"/>
    </source>
</evidence>
<reference key="1">
    <citation type="journal article" date="2008" name="DNA Res.">
        <title>Comparative genome analysis of Lactobacillus reuteri and Lactobacillus fermentum reveal a genomic island for reuterin and cobalamin production.</title>
        <authorList>
            <person name="Morita H."/>
            <person name="Toh H."/>
            <person name="Fukuda S."/>
            <person name="Horikawa H."/>
            <person name="Oshima K."/>
            <person name="Suzuki T."/>
            <person name="Murakami M."/>
            <person name="Hisamatsu S."/>
            <person name="Kato Y."/>
            <person name="Takizawa T."/>
            <person name="Fukuoka H."/>
            <person name="Yoshimura T."/>
            <person name="Itoh K."/>
            <person name="O'Sullivan D.J."/>
            <person name="McKay L.L."/>
            <person name="Ohno H."/>
            <person name="Kikuchi J."/>
            <person name="Masaoka T."/>
            <person name="Hattori M."/>
        </authorList>
    </citation>
    <scope>NUCLEOTIDE SEQUENCE [LARGE SCALE GENOMIC DNA]</scope>
    <source>
        <strain>NBRC 3956 / LMG 18251</strain>
    </source>
</reference>
<feature type="chain" id="PRO_1000092697" description="Imidazoleglycerol-phosphate dehydratase">
    <location>
        <begin position="1"/>
        <end position="194"/>
    </location>
</feature>
<keyword id="KW-0028">Amino-acid biosynthesis</keyword>
<keyword id="KW-0963">Cytoplasm</keyword>
<keyword id="KW-0368">Histidine biosynthesis</keyword>
<keyword id="KW-0456">Lyase</keyword>
<keyword id="KW-1185">Reference proteome</keyword>
<sequence length="194" mass="21353">MRTATIKRQTKETQIEVSLNLDQQSGIQIDTGVGYFDHMLNLLAKHGRFGLVVKATGDLEVDAHHTVEDTGIVLGETLKEALGDKVQIERYGDAMVPMDETLAQVVVDLSGRSYLVFDAELTNPRLGSFETEVTEDFFQALAFAAEMNLHARVLYGRNTHHKIEALFKATGRALRQAVTINPAIEGVNSTKGVI</sequence>
<gene>
    <name evidence="1" type="primary">hisB</name>
    <name type="ordered locus">LAF_0758</name>
</gene>
<name>HIS7_LIMF3</name>
<accession>B2GBR2</accession>
<protein>
    <recommendedName>
        <fullName evidence="1">Imidazoleglycerol-phosphate dehydratase</fullName>
        <shortName evidence="1">IGPD</shortName>
        <ecNumber evidence="1">4.2.1.19</ecNumber>
    </recommendedName>
</protein>
<comment type="catalytic activity">
    <reaction evidence="1">
        <text>D-erythro-1-(imidazol-4-yl)glycerol 3-phosphate = 3-(imidazol-4-yl)-2-oxopropyl phosphate + H2O</text>
        <dbReference type="Rhea" id="RHEA:11040"/>
        <dbReference type="ChEBI" id="CHEBI:15377"/>
        <dbReference type="ChEBI" id="CHEBI:57766"/>
        <dbReference type="ChEBI" id="CHEBI:58278"/>
        <dbReference type="EC" id="4.2.1.19"/>
    </reaction>
</comment>
<comment type="pathway">
    <text evidence="1">Amino-acid biosynthesis; L-histidine biosynthesis; L-histidine from 5-phospho-alpha-D-ribose 1-diphosphate: step 6/9.</text>
</comment>
<comment type="subcellular location">
    <subcellularLocation>
        <location evidence="1">Cytoplasm</location>
    </subcellularLocation>
</comment>
<comment type="similarity">
    <text evidence="1">Belongs to the imidazoleglycerol-phosphate dehydratase family.</text>
</comment>
<proteinExistence type="inferred from homology"/>
<organism>
    <name type="scientific">Limosilactobacillus fermentum (strain NBRC 3956 / LMG 18251)</name>
    <name type="common">Lactobacillus fermentum</name>
    <dbReference type="NCBI Taxonomy" id="334390"/>
    <lineage>
        <taxon>Bacteria</taxon>
        <taxon>Bacillati</taxon>
        <taxon>Bacillota</taxon>
        <taxon>Bacilli</taxon>
        <taxon>Lactobacillales</taxon>
        <taxon>Lactobacillaceae</taxon>
        <taxon>Limosilactobacillus</taxon>
    </lineage>
</organism>
<dbReference type="EC" id="4.2.1.19" evidence="1"/>
<dbReference type="EMBL" id="AP008937">
    <property type="protein sequence ID" value="BAG27094.1"/>
    <property type="molecule type" value="Genomic_DNA"/>
</dbReference>
<dbReference type="RefSeq" id="WP_012391115.1">
    <property type="nucleotide sequence ID" value="NC_010610.1"/>
</dbReference>
<dbReference type="SMR" id="B2GBR2"/>
<dbReference type="KEGG" id="lfe:LAF_0758"/>
<dbReference type="eggNOG" id="COG0131">
    <property type="taxonomic scope" value="Bacteria"/>
</dbReference>
<dbReference type="HOGENOM" id="CLU_044308_3_0_9"/>
<dbReference type="UniPathway" id="UPA00031">
    <property type="reaction ID" value="UER00011"/>
</dbReference>
<dbReference type="Proteomes" id="UP000001697">
    <property type="component" value="Chromosome"/>
</dbReference>
<dbReference type="GO" id="GO:0005737">
    <property type="term" value="C:cytoplasm"/>
    <property type="evidence" value="ECO:0007669"/>
    <property type="project" value="UniProtKB-SubCell"/>
</dbReference>
<dbReference type="GO" id="GO:0004424">
    <property type="term" value="F:imidazoleglycerol-phosphate dehydratase activity"/>
    <property type="evidence" value="ECO:0007669"/>
    <property type="project" value="UniProtKB-UniRule"/>
</dbReference>
<dbReference type="GO" id="GO:0000105">
    <property type="term" value="P:L-histidine biosynthetic process"/>
    <property type="evidence" value="ECO:0007669"/>
    <property type="project" value="UniProtKB-UniRule"/>
</dbReference>
<dbReference type="CDD" id="cd07914">
    <property type="entry name" value="IGPD"/>
    <property type="match status" value="1"/>
</dbReference>
<dbReference type="FunFam" id="3.30.230.40:FF:000001">
    <property type="entry name" value="Imidazoleglycerol-phosphate dehydratase HisB"/>
    <property type="match status" value="1"/>
</dbReference>
<dbReference type="FunFam" id="3.30.230.40:FF:000003">
    <property type="entry name" value="Imidazoleglycerol-phosphate dehydratase HisB"/>
    <property type="match status" value="1"/>
</dbReference>
<dbReference type="Gene3D" id="3.30.230.40">
    <property type="entry name" value="Imidazole glycerol phosphate dehydratase, domain 1"/>
    <property type="match status" value="2"/>
</dbReference>
<dbReference type="HAMAP" id="MF_00076">
    <property type="entry name" value="HisB"/>
    <property type="match status" value="1"/>
</dbReference>
<dbReference type="InterPro" id="IPR038494">
    <property type="entry name" value="IGPD_sf"/>
</dbReference>
<dbReference type="InterPro" id="IPR000807">
    <property type="entry name" value="ImidazoleglycerolP_deHydtase"/>
</dbReference>
<dbReference type="InterPro" id="IPR020565">
    <property type="entry name" value="ImidazoleglycerP_deHydtase_CS"/>
</dbReference>
<dbReference type="InterPro" id="IPR020568">
    <property type="entry name" value="Ribosomal_Su5_D2-typ_SF"/>
</dbReference>
<dbReference type="NCBIfam" id="NF002107">
    <property type="entry name" value="PRK00951.1-2"/>
    <property type="match status" value="1"/>
</dbReference>
<dbReference type="NCBIfam" id="NF002111">
    <property type="entry name" value="PRK00951.2-1"/>
    <property type="match status" value="1"/>
</dbReference>
<dbReference type="NCBIfam" id="NF002114">
    <property type="entry name" value="PRK00951.2-4"/>
    <property type="match status" value="1"/>
</dbReference>
<dbReference type="PANTHER" id="PTHR23133:SF2">
    <property type="entry name" value="IMIDAZOLEGLYCEROL-PHOSPHATE DEHYDRATASE"/>
    <property type="match status" value="1"/>
</dbReference>
<dbReference type="PANTHER" id="PTHR23133">
    <property type="entry name" value="IMIDAZOLEGLYCEROL-PHOSPHATE DEHYDRATASE HIS7"/>
    <property type="match status" value="1"/>
</dbReference>
<dbReference type="Pfam" id="PF00475">
    <property type="entry name" value="IGPD"/>
    <property type="match status" value="1"/>
</dbReference>
<dbReference type="SUPFAM" id="SSF54211">
    <property type="entry name" value="Ribosomal protein S5 domain 2-like"/>
    <property type="match status" value="2"/>
</dbReference>
<dbReference type="PROSITE" id="PS00954">
    <property type="entry name" value="IGP_DEHYDRATASE_1"/>
    <property type="match status" value="1"/>
</dbReference>
<dbReference type="PROSITE" id="PS00955">
    <property type="entry name" value="IGP_DEHYDRATASE_2"/>
    <property type="match status" value="1"/>
</dbReference>